<gene>
    <name evidence="1" type="primary">fmt</name>
    <name type="ordered locus">Ping_0079</name>
</gene>
<reference key="1">
    <citation type="journal article" date="2008" name="BMC Genomics">
        <title>Genomics of an extreme psychrophile, Psychromonas ingrahamii.</title>
        <authorList>
            <person name="Riley M."/>
            <person name="Staley J.T."/>
            <person name="Danchin A."/>
            <person name="Wang T.Z."/>
            <person name="Brettin T.S."/>
            <person name="Hauser L.J."/>
            <person name="Land M.L."/>
            <person name="Thompson L.S."/>
        </authorList>
    </citation>
    <scope>NUCLEOTIDE SEQUENCE [LARGE SCALE GENOMIC DNA]</scope>
    <source>
        <strain>DSM 17664 / CCUG 51855 / 37</strain>
    </source>
</reference>
<accession>A1SR38</accession>
<organism>
    <name type="scientific">Psychromonas ingrahamii (strain DSM 17664 / CCUG 51855 / 37)</name>
    <dbReference type="NCBI Taxonomy" id="357804"/>
    <lineage>
        <taxon>Bacteria</taxon>
        <taxon>Pseudomonadati</taxon>
        <taxon>Pseudomonadota</taxon>
        <taxon>Gammaproteobacteria</taxon>
        <taxon>Alteromonadales</taxon>
        <taxon>Psychromonadaceae</taxon>
        <taxon>Psychromonas</taxon>
    </lineage>
</organism>
<comment type="function">
    <text evidence="1">Attaches a formyl group to the free amino group of methionyl-tRNA(fMet). The formyl group appears to play a dual role in the initiator identity of N-formylmethionyl-tRNA by promoting its recognition by IF2 and preventing the misappropriation of this tRNA by the elongation apparatus.</text>
</comment>
<comment type="catalytic activity">
    <reaction evidence="1">
        <text>L-methionyl-tRNA(fMet) + (6R)-10-formyltetrahydrofolate = N-formyl-L-methionyl-tRNA(fMet) + (6S)-5,6,7,8-tetrahydrofolate + H(+)</text>
        <dbReference type="Rhea" id="RHEA:24380"/>
        <dbReference type="Rhea" id="RHEA-COMP:9952"/>
        <dbReference type="Rhea" id="RHEA-COMP:9953"/>
        <dbReference type="ChEBI" id="CHEBI:15378"/>
        <dbReference type="ChEBI" id="CHEBI:57453"/>
        <dbReference type="ChEBI" id="CHEBI:78530"/>
        <dbReference type="ChEBI" id="CHEBI:78844"/>
        <dbReference type="ChEBI" id="CHEBI:195366"/>
        <dbReference type="EC" id="2.1.2.9"/>
    </reaction>
</comment>
<comment type="similarity">
    <text evidence="1">Belongs to the Fmt family.</text>
</comment>
<evidence type="ECO:0000255" key="1">
    <source>
        <dbReference type="HAMAP-Rule" id="MF_00182"/>
    </source>
</evidence>
<feature type="chain" id="PRO_1000020138" description="Methionyl-tRNA formyltransferase">
    <location>
        <begin position="1"/>
        <end position="316"/>
    </location>
</feature>
<feature type="binding site" evidence="1">
    <location>
        <begin position="112"/>
        <end position="115"/>
    </location>
    <ligand>
        <name>(6S)-5,6,7,8-tetrahydrofolate</name>
        <dbReference type="ChEBI" id="CHEBI:57453"/>
    </ligand>
</feature>
<keyword id="KW-0648">Protein biosynthesis</keyword>
<keyword id="KW-1185">Reference proteome</keyword>
<keyword id="KW-0808">Transferase</keyword>
<protein>
    <recommendedName>
        <fullName evidence="1">Methionyl-tRNA formyltransferase</fullName>
        <ecNumber evidence="1">2.1.2.9</ecNumber>
    </recommendedName>
</protein>
<sequence length="316" mass="34425">MEKLNIIFAGTPDFAAKHLSALINSEHNVIAVYTQPDRPAGRGKRLTASAVKELAMEQQIPVYQPANFKEVDSTKQLAALNADLMIVVAYGLLLPQLVLGIPRLGCLNVHGSLLPRWRGAAPIQRAIWAGDTETGVTIMQMDEGLDTGDMLAKVSCPIERDETSASLYEKLALQAPDVLVDTINKLVKGELKAEKQDPQLACYAKKLSKSEALIDWSKDAVFIERCIRAFNPWPVSYFVLDDKVIKVRQAGLLATKSEQTAGTIITASKNGIQVATGEGIINLEVLQLAGKKALPVQDILNSRRELFAQGTLLQQG</sequence>
<name>FMT_PSYIN</name>
<dbReference type="EC" id="2.1.2.9" evidence="1"/>
<dbReference type="EMBL" id="CP000510">
    <property type="protein sequence ID" value="ABM01953.1"/>
    <property type="molecule type" value="Genomic_DNA"/>
</dbReference>
<dbReference type="RefSeq" id="WP_011768512.1">
    <property type="nucleotide sequence ID" value="NC_008709.1"/>
</dbReference>
<dbReference type="SMR" id="A1SR38"/>
<dbReference type="STRING" id="357804.Ping_0079"/>
<dbReference type="KEGG" id="pin:Ping_0079"/>
<dbReference type="eggNOG" id="COG0223">
    <property type="taxonomic scope" value="Bacteria"/>
</dbReference>
<dbReference type="HOGENOM" id="CLU_033347_1_2_6"/>
<dbReference type="OrthoDB" id="9802815at2"/>
<dbReference type="Proteomes" id="UP000000639">
    <property type="component" value="Chromosome"/>
</dbReference>
<dbReference type="GO" id="GO:0005829">
    <property type="term" value="C:cytosol"/>
    <property type="evidence" value="ECO:0007669"/>
    <property type="project" value="TreeGrafter"/>
</dbReference>
<dbReference type="GO" id="GO:0004479">
    <property type="term" value="F:methionyl-tRNA formyltransferase activity"/>
    <property type="evidence" value="ECO:0007669"/>
    <property type="project" value="UniProtKB-UniRule"/>
</dbReference>
<dbReference type="CDD" id="cd08646">
    <property type="entry name" value="FMT_core_Met-tRNA-FMT_N"/>
    <property type="match status" value="1"/>
</dbReference>
<dbReference type="CDD" id="cd08704">
    <property type="entry name" value="Met_tRNA_FMT_C"/>
    <property type="match status" value="1"/>
</dbReference>
<dbReference type="FunFam" id="3.40.50.12230:FF:000001">
    <property type="entry name" value="Methionyl-tRNA formyltransferase"/>
    <property type="match status" value="1"/>
</dbReference>
<dbReference type="FunFam" id="3.40.50.170:FF:000003">
    <property type="entry name" value="Methionyl-tRNA formyltransferase"/>
    <property type="match status" value="1"/>
</dbReference>
<dbReference type="Gene3D" id="3.10.25.10">
    <property type="entry name" value="Formyl transferase, C-terminal domain"/>
    <property type="match status" value="1"/>
</dbReference>
<dbReference type="Gene3D" id="3.40.50.170">
    <property type="entry name" value="Formyl transferase, N-terminal domain"/>
    <property type="match status" value="1"/>
</dbReference>
<dbReference type="HAMAP" id="MF_00182">
    <property type="entry name" value="Formyl_trans"/>
    <property type="match status" value="1"/>
</dbReference>
<dbReference type="InterPro" id="IPR005794">
    <property type="entry name" value="Fmt"/>
</dbReference>
<dbReference type="InterPro" id="IPR005793">
    <property type="entry name" value="Formyl_trans_C"/>
</dbReference>
<dbReference type="InterPro" id="IPR037022">
    <property type="entry name" value="Formyl_trans_C_sf"/>
</dbReference>
<dbReference type="InterPro" id="IPR002376">
    <property type="entry name" value="Formyl_transf_N"/>
</dbReference>
<dbReference type="InterPro" id="IPR036477">
    <property type="entry name" value="Formyl_transf_N_sf"/>
</dbReference>
<dbReference type="InterPro" id="IPR011034">
    <property type="entry name" value="Formyl_transferase-like_C_sf"/>
</dbReference>
<dbReference type="InterPro" id="IPR001555">
    <property type="entry name" value="GART_AS"/>
</dbReference>
<dbReference type="InterPro" id="IPR044135">
    <property type="entry name" value="Met-tRNA-FMT_C"/>
</dbReference>
<dbReference type="InterPro" id="IPR041711">
    <property type="entry name" value="Met-tRNA-FMT_N"/>
</dbReference>
<dbReference type="NCBIfam" id="TIGR00460">
    <property type="entry name" value="fmt"/>
    <property type="match status" value="1"/>
</dbReference>
<dbReference type="PANTHER" id="PTHR11138">
    <property type="entry name" value="METHIONYL-TRNA FORMYLTRANSFERASE"/>
    <property type="match status" value="1"/>
</dbReference>
<dbReference type="PANTHER" id="PTHR11138:SF5">
    <property type="entry name" value="METHIONYL-TRNA FORMYLTRANSFERASE, MITOCHONDRIAL"/>
    <property type="match status" value="1"/>
</dbReference>
<dbReference type="Pfam" id="PF02911">
    <property type="entry name" value="Formyl_trans_C"/>
    <property type="match status" value="1"/>
</dbReference>
<dbReference type="Pfam" id="PF00551">
    <property type="entry name" value="Formyl_trans_N"/>
    <property type="match status" value="1"/>
</dbReference>
<dbReference type="SUPFAM" id="SSF50486">
    <property type="entry name" value="FMT C-terminal domain-like"/>
    <property type="match status" value="1"/>
</dbReference>
<dbReference type="SUPFAM" id="SSF53328">
    <property type="entry name" value="Formyltransferase"/>
    <property type="match status" value="1"/>
</dbReference>
<dbReference type="PROSITE" id="PS00373">
    <property type="entry name" value="GART"/>
    <property type="match status" value="1"/>
</dbReference>
<proteinExistence type="inferred from homology"/>